<sequence>MSNNTDLSPVHVIGGGLAGSEAAWQIAQAGVPVVLHEMRPVRGTDAHKTEQLAELVCSNSFRSDDAETNAVGVLHAEMRLAGSLIMACADAHQVPAGGALAVDREGFSQAVTARLEAHPLITIEREEITGLPPTEWGTTIIATGPLTAPSLAEAIAAETDADALAFFDAIAPIIHFDSINMDVCWFQSRYDKVGPGGTGKDYINCPMDKEQYEAFVAALIEGDKTDFKEWEGTPYFDGCLPIEVMAERGPETLRHGPMKPMGLTNAHNPTVKPYAVVQLRQDNALGTLYNMVGFQTKLKYGSQTGIFKMIPGLENAEFARLGGLHRNTYLNSPVLLDNVLRLKSRQTLRFAGQVTGCEGYVESSAIGLLAGRFTAAEKLSQAAVPPPPTTAFGALLGHITGGHIVTDDEPGKRSFQPMNVNFGLFPPVDVPKPEGKRLRGKEKTIAKKRALSARALADCRNWLSLY</sequence>
<accession>P64233</accession>
<accession>G0K9C2</accession>
<accession>Q8YGT4</accession>
<protein>
    <recommendedName>
        <fullName evidence="1">Methylenetetrahydrofolate--tRNA-(uracil-5-)-methyltransferase TrmFO</fullName>
        <ecNumber evidence="1">2.1.1.74</ecNumber>
    </recommendedName>
    <alternativeName>
        <fullName evidence="1">Folate-dependent tRNA (uracil-5-)-methyltransferase</fullName>
    </alternativeName>
    <alternativeName>
        <fullName evidence="1">Folate-dependent tRNA(M-5-U54)-methyltransferase</fullName>
    </alternativeName>
</protein>
<gene>
    <name evidence="1" type="primary">trmFO</name>
    <name type="synonym">gid</name>
    <name type="ordered locus">BR0894</name>
    <name type="ordered locus">BS1330_I0890</name>
</gene>
<keyword id="KW-0963">Cytoplasm</keyword>
<keyword id="KW-0274">FAD</keyword>
<keyword id="KW-0285">Flavoprotein</keyword>
<keyword id="KW-0489">Methyltransferase</keyword>
<keyword id="KW-0520">NAD</keyword>
<keyword id="KW-0521">NADP</keyword>
<keyword id="KW-0808">Transferase</keyword>
<keyword id="KW-0819">tRNA processing</keyword>
<evidence type="ECO:0000255" key="1">
    <source>
        <dbReference type="HAMAP-Rule" id="MF_01037"/>
    </source>
</evidence>
<proteinExistence type="inferred from homology"/>
<feature type="chain" id="PRO_0000117240" description="Methylenetetrahydrofolate--tRNA-(uracil-5-)-methyltransferase TrmFO">
    <location>
        <begin position="1"/>
        <end position="466"/>
    </location>
</feature>
<feature type="binding site" evidence="1">
    <location>
        <begin position="14"/>
        <end position="19"/>
    </location>
    <ligand>
        <name>FAD</name>
        <dbReference type="ChEBI" id="CHEBI:57692"/>
    </ligand>
</feature>
<comment type="function">
    <text evidence="1">Catalyzes the folate-dependent formation of 5-methyl-uridine at position 54 (M-5-U54) in all tRNAs.</text>
</comment>
<comment type="catalytic activity">
    <reaction evidence="1">
        <text>uridine(54) in tRNA + (6R)-5,10-methylene-5,6,7,8-tetrahydrofolate + NADH + H(+) = 5-methyluridine(54) in tRNA + (6S)-5,6,7,8-tetrahydrofolate + NAD(+)</text>
        <dbReference type="Rhea" id="RHEA:16873"/>
        <dbReference type="Rhea" id="RHEA-COMP:10167"/>
        <dbReference type="Rhea" id="RHEA-COMP:10193"/>
        <dbReference type="ChEBI" id="CHEBI:15378"/>
        <dbReference type="ChEBI" id="CHEBI:15636"/>
        <dbReference type="ChEBI" id="CHEBI:57453"/>
        <dbReference type="ChEBI" id="CHEBI:57540"/>
        <dbReference type="ChEBI" id="CHEBI:57945"/>
        <dbReference type="ChEBI" id="CHEBI:65315"/>
        <dbReference type="ChEBI" id="CHEBI:74447"/>
        <dbReference type="EC" id="2.1.1.74"/>
    </reaction>
</comment>
<comment type="catalytic activity">
    <reaction evidence="1">
        <text>uridine(54) in tRNA + (6R)-5,10-methylene-5,6,7,8-tetrahydrofolate + NADPH + H(+) = 5-methyluridine(54) in tRNA + (6S)-5,6,7,8-tetrahydrofolate + NADP(+)</text>
        <dbReference type="Rhea" id="RHEA:62372"/>
        <dbReference type="Rhea" id="RHEA-COMP:10167"/>
        <dbReference type="Rhea" id="RHEA-COMP:10193"/>
        <dbReference type="ChEBI" id="CHEBI:15378"/>
        <dbReference type="ChEBI" id="CHEBI:15636"/>
        <dbReference type="ChEBI" id="CHEBI:57453"/>
        <dbReference type="ChEBI" id="CHEBI:57783"/>
        <dbReference type="ChEBI" id="CHEBI:58349"/>
        <dbReference type="ChEBI" id="CHEBI:65315"/>
        <dbReference type="ChEBI" id="CHEBI:74447"/>
        <dbReference type="EC" id="2.1.1.74"/>
    </reaction>
</comment>
<comment type="cofactor">
    <cofactor evidence="1">
        <name>FAD</name>
        <dbReference type="ChEBI" id="CHEBI:57692"/>
    </cofactor>
</comment>
<comment type="subcellular location">
    <subcellularLocation>
        <location evidence="1">Cytoplasm</location>
    </subcellularLocation>
</comment>
<comment type="similarity">
    <text evidence="1">Belongs to the MnmG family. TrmFO subfamily.</text>
</comment>
<organism>
    <name type="scientific">Brucella suis biovar 1 (strain 1330)</name>
    <dbReference type="NCBI Taxonomy" id="204722"/>
    <lineage>
        <taxon>Bacteria</taxon>
        <taxon>Pseudomonadati</taxon>
        <taxon>Pseudomonadota</taxon>
        <taxon>Alphaproteobacteria</taxon>
        <taxon>Hyphomicrobiales</taxon>
        <taxon>Brucellaceae</taxon>
        <taxon>Brucella/Ochrobactrum group</taxon>
        <taxon>Brucella</taxon>
    </lineage>
</organism>
<dbReference type="EC" id="2.1.1.74" evidence="1"/>
<dbReference type="EMBL" id="AE014291">
    <property type="protein sequence ID" value="AAN29822.1"/>
    <property type="molecule type" value="Genomic_DNA"/>
</dbReference>
<dbReference type="EMBL" id="CP002997">
    <property type="protein sequence ID" value="AEM18239.1"/>
    <property type="molecule type" value="Genomic_DNA"/>
</dbReference>
<dbReference type="RefSeq" id="WP_002967605.1">
    <property type="nucleotide sequence ID" value="NZ_KN046804.1"/>
</dbReference>
<dbReference type="SMR" id="P64233"/>
<dbReference type="GeneID" id="45124322"/>
<dbReference type="KEGG" id="bms:BR0894"/>
<dbReference type="KEGG" id="bsi:BS1330_I0890"/>
<dbReference type="PATRIC" id="fig|204722.21.peg.2694"/>
<dbReference type="HOGENOM" id="CLU_033057_1_0_5"/>
<dbReference type="Proteomes" id="UP000007104">
    <property type="component" value="Chromosome I"/>
</dbReference>
<dbReference type="GO" id="GO:0005829">
    <property type="term" value="C:cytosol"/>
    <property type="evidence" value="ECO:0007669"/>
    <property type="project" value="TreeGrafter"/>
</dbReference>
<dbReference type="GO" id="GO:0050660">
    <property type="term" value="F:flavin adenine dinucleotide binding"/>
    <property type="evidence" value="ECO:0007669"/>
    <property type="project" value="UniProtKB-UniRule"/>
</dbReference>
<dbReference type="GO" id="GO:0047151">
    <property type="term" value="F:tRNA (uracil(54)-C5)-methyltransferase activity, 5,10-methylenetetrahydrofolate-dependent"/>
    <property type="evidence" value="ECO:0007669"/>
    <property type="project" value="UniProtKB-UniRule"/>
</dbReference>
<dbReference type="GO" id="GO:0030488">
    <property type="term" value="P:tRNA methylation"/>
    <property type="evidence" value="ECO:0007669"/>
    <property type="project" value="TreeGrafter"/>
</dbReference>
<dbReference type="GO" id="GO:0002098">
    <property type="term" value="P:tRNA wobble uridine modification"/>
    <property type="evidence" value="ECO:0007669"/>
    <property type="project" value="TreeGrafter"/>
</dbReference>
<dbReference type="Gene3D" id="3.50.50.60">
    <property type="entry name" value="FAD/NAD(P)-binding domain"/>
    <property type="match status" value="2"/>
</dbReference>
<dbReference type="HAMAP" id="MF_01037">
    <property type="entry name" value="TrmFO"/>
    <property type="match status" value="1"/>
</dbReference>
<dbReference type="InterPro" id="IPR036188">
    <property type="entry name" value="FAD/NAD-bd_sf"/>
</dbReference>
<dbReference type="InterPro" id="IPR002218">
    <property type="entry name" value="MnmG-rel"/>
</dbReference>
<dbReference type="InterPro" id="IPR020595">
    <property type="entry name" value="MnmG-rel_CS"/>
</dbReference>
<dbReference type="InterPro" id="IPR040131">
    <property type="entry name" value="MnmG_N"/>
</dbReference>
<dbReference type="InterPro" id="IPR004417">
    <property type="entry name" value="TrmFO"/>
</dbReference>
<dbReference type="NCBIfam" id="TIGR00137">
    <property type="entry name" value="gid_trmFO"/>
    <property type="match status" value="1"/>
</dbReference>
<dbReference type="NCBIfam" id="NF003739">
    <property type="entry name" value="PRK05335.1"/>
    <property type="match status" value="1"/>
</dbReference>
<dbReference type="PANTHER" id="PTHR11806">
    <property type="entry name" value="GLUCOSE INHIBITED DIVISION PROTEIN A"/>
    <property type="match status" value="1"/>
</dbReference>
<dbReference type="PANTHER" id="PTHR11806:SF2">
    <property type="entry name" value="METHYLENETETRAHYDROFOLATE--TRNA-(URACIL-5-)-METHYLTRANSFERASE TRMFO"/>
    <property type="match status" value="1"/>
</dbReference>
<dbReference type="Pfam" id="PF01134">
    <property type="entry name" value="GIDA"/>
    <property type="match status" value="1"/>
</dbReference>
<dbReference type="SUPFAM" id="SSF51905">
    <property type="entry name" value="FAD/NAD(P)-binding domain"/>
    <property type="match status" value="1"/>
</dbReference>
<dbReference type="PROSITE" id="PS01281">
    <property type="entry name" value="GIDA_2"/>
    <property type="match status" value="1"/>
</dbReference>
<name>TRMFO_BRUSU</name>
<reference key="1">
    <citation type="journal article" date="2002" name="Proc. Natl. Acad. Sci. U.S.A.">
        <title>The Brucella suis genome reveals fundamental similarities between animal and plant pathogens and symbionts.</title>
        <authorList>
            <person name="Paulsen I.T."/>
            <person name="Seshadri R."/>
            <person name="Nelson K.E."/>
            <person name="Eisen J.A."/>
            <person name="Heidelberg J.F."/>
            <person name="Read T.D."/>
            <person name="Dodson R.J."/>
            <person name="Umayam L.A."/>
            <person name="Brinkac L.M."/>
            <person name="Beanan M.J."/>
            <person name="Daugherty S.C."/>
            <person name="DeBoy R.T."/>
            <person name="Durkin A.S."/>
            <person name="Kolonay J.F."/>
            <person name="Madupu R."/>
            <person name="Nelson W.C."/>
            <person name="Ayodeji B."/>
            <person name="Kraul M."/>
            <person name="Shetty J."/>
            <person name="Malek J.A."/>
            <person name="Van Aken S.E."/>
            <person name="Riedmuller S."/>
            <person name="Tettelin H."/>
            <person name="Gill S.R."/>
            <person name="White O."/>
            <person name="Salzberg S.L."/>
            <person name="Hoover D.L."/>
            <person name="Lindler L.E."/>
            <person name="Halling S.M."/>
            <person name="Boyle S.M."/>
            <person name="Fraser C.M."/>
        </authorList>
    </citation>
    <scope>NUCLEOTIDE SEQUENCE [LARGE SCALE GENOMIC DNA]</scope>
    <source>
        <strain>1330</strain>
    </source>
</reference>
<reference key="2">
    <citation type="journal article" date="2011" name="J. Bacteriol.">
        <title>Revised genome sequence of Brucella suis 1330.</title>
        <authorList>
            <person name="Tae H."/>
            <person name="Shallom S."/>
            <person name="Settlage R."/>
            <person name="Preston D."/>
            <person name="Adams L.G."/>
            <person name="Garner H.R."/>
        </authorList>
    </citation>
    <scope>NUCLEOTIDE SEQUENCE [LARGE SCALE GENOMIC DNA]</scope>
    <source>
        <strain>1330</strain>
    </source>
</reference>